<sequence>MKDELFKQSPKKQFEFDKSVASVFDDMINRSVPFYRENLELCGNLLAKILPTNASVCDLGCSSANFLIFLANLRKDFKLFGVDNSASMLEVAKSKAKAYGLDISFFEANLCEFDFFTCDVFVANYTMQFIRPPKRQELLDQIYKNLNSKGILIMSEKILYEDAFLSKNIIELYADYKEKQGYSKFEIAAKREALENVLIPYSQKENLNMLEKAGFKKIESIFKWANFETFIAFKD</sequence>
<keyword id="KW-1185">Reference proteome</keyword>
<keyword id="KW-0949">S-adenosyl-L-methionine</keyword>
<keyword id="KW-0808">Transferase</keyword>
<organism>
    <name type="scientific">Campylobacter jejuni subsp. jejuni serotype O:2 (strain ATCC 700819 / NCTC 11168)</name>
    <dbReference type="NCBI Taxonomy" id="192222"/>
    <lineage>
        <taxon>Bacteria</taxon>
        <taxon>Pseudomonadati</taxon>
        <taxon>Campylobacterota</taxon>
        <taxon>Epsilonproteobacteria</taxon>
        <taxon>Campylobacterales</taxon>
        <taxon>Campylobacteraceae</taxon>
        <taxon>Campylobacter</taxon>
    </lineage>
</organism>
<gene>
    <name evidence="1" type="primary">cmoA</name>
    <name type="ordered locus">Cj0590</name>
</gene>
<comment type="function">
    <text evidence="1">Catalyzes the conversion of S-adenosyl-L-methionine (SAM) to carboxy-S-adenosyl-L-methionine (Cx-SAM).</text>
</comment>
<comment type="catalytic activity">
    <reaction evidence="1">
        <text>prephenate + S-adenosyl-L-methionine = carboxy-S-adenosyl-L-methionine + 3-phenylpyruvate + H2O</text>
        <dbReference type="Rhea" id="RHEA:51692"/>
        <dbReference type="ChEBI" id="CHEBI:15377"/>
        <dbReference type="ChEBI" id="CHEBI:18005"/>
        <dbReference type="ChEBI" id="CHEBI:29934"/>
        <dbReference type="ChEBI" id="CHEBI:59789"/>
        <dbReference type="ChEBI" id="CHEBI:134278"/>
    </reaction>
</comment>
<comment type="subunit">
    <text evidence="1">Homodimer.</text>
</comment>
<comment type="similarity">
    <text evidence="1">Belongs to the class I-like SAM-binding methyltransferase superfamily. Cx-SAM synthase family.</text>
</comment>
<comment type="sequence caution" evidence="2">
    <conflict type="erroneous initiation">
        <sequence resource="EMBL-CDS" id="CAL34736"/>
    </conflict>
</comment>
<accession>Q0PAS7</accession>
<reference key="1">
    <citation type="journal article" date="2000" name="Nature">
        <title>The genome sequence of the food-borne pathogen Campylobacter jejuni reveals hypervariable sequences.</title>
        <authorList>
            <person name="Parkhill J."/>
            <person name="Wren B.W."/>
            <person name="Mungall K.L."/>
            <person name="Ketley J.M."/>
            <person name="Churcher C.M."/>
            <person name="Basham D."/>
            <person name="Chillingworth T."/>
            <person name="Davies R.M."/>
            <person name="Feltwell T."/>
            <person name="Holroyd S."/>
            <person name="Jagels K."/>
            <person name="Karlyshev A.V."/>
            <person name="Moule S."/>
            <person name="Pallen M.J."/>
            <person name="Penn C.W."/>
            <person name="Quail M.A."/>
            <person name="Rajandream M.A."/>
            <person name="Rutherford K.M."/>
            <person name="van Vliet A.H.M."/>
            <person name="Whitehead S."/>
            <person name="Barrell B.G."/>
        </authorList>
    </citation>
    <scope>NUCLEOTIDE SEQUENCE [LARGE SCALE GENOMIC DNA]</scope>
    <source>
        <strain>ATCC 700819 / NCTC 11168</strain>
    </source>
</reference>
<dbReference type="EC" id="2.1.3.-" evidence="1"/>
<dbReference type="EMBL" id="AL111168">
    <property type="protein sequence ID" value="CAL34736.1"/>
    <property type="status" value="ALT_INIT"/>
    <property type="molecule type" value="Genomic_DNA"/>
</dbReference>
<dbReference type="PIR" id="E81406">
    <property type="entry name" value="E81406"/>
</dbReference>
<dbReference type="RefSeq" id="YP_002344020.1">
    <property type="nucleotide sequence ID" value="NC_002163.1"/>
</dbReference>
<dbReference type="SMR" id="Q0PAS7"/>
<dbReference type="IntAct" id="Q0PAS7">
    <property type="interactions" value="1"/>
</dbReference>
<dbReference type="STRING" id="192222.Cj0590"/>
<dbReference type="PaxDb" id="192222-Cj0590"/>
<dbReference type="EnsemblBacteria" id="CAL34736">
    <property type="protein sequence ID" value="CAL34736"/>
    <property type="gene ID" value="Cj0590"/>
</dbReference>
<dbReference type="GeneID" id="904914"/>
<dbReference type="KEGG" id="cje:Cj0590"/>
<dbReference type="PATRIC" id="fig|192222.6.peg.582"/>
<dbReference type="eggNOG" id="COG2890">
    <property type="taxonomic scope" value="Bacteria"/>
</dbReference>
<dbReference type="HOGENOM" id="CLU_078475_0_0_7"/>
<dbReference type="OrthoDB" id="5386938at2"/>
<dbReference type="Proteomes" id="UP000000799">
    <property type="component" value="Chromosome"/>
</dbReference>
<dbReference type="GO" id="GO:0016743">
    <property type="term" value="F:carboxyl- or carbamoyltransferase activity"/>
    <property type="evidence" value="ECO:0007669"/>
    <property type="project" value="UniProtKB-UniRule"/>
</dbReference>
<dbReference type="GO" id="GO:1904047">
    <property type="term" value="F:S-adenosyl-L-methionine binding"/>
    <property type="evidence" value="ECO:0007669"/>
    <property type="project" value="UniProtKB-UniRule"/>
</dbReference>
<dbReference type="GO" id="GO:0002098">
    <property type="term" value="P:tRNA wobble uridine modification"/>
    <property type="evidence" value="ECO:0007669"/>
    <property type="project" value="InterPro"/>
</dbReference>
<dbReference type="CDD" id="cd02440">
    <property type="entry name" value="AdoMet_MTases"/>
    <property type="match status" value="1"/>
</dbReference>
<dbReference type="Gene3D" id="3.40.50.150">
    <property type="entry name" value="Vaccinia Virus protein VP39"/>
    <property type="match status" value="1"/>
</dbReference>
<dbReference type="HAMAP" id="MF_01589">
    <property type="entry name" value="Cx_SAM_synthase"/>
    <property type="match status" value="1"/>
</dbReference>
<dbReference type="InterPro" id="IPR005271">
    <property type="entry name" value="CmoA"/>
</dbReference>
<dbReference type="InterPro" id="IPR041698">
    <property type="entry name" value="Methyltransf_25"/>
</dbReference>
<dbReference type="InterPro" id="IPR029063">
    <property type="entry name" value="SAM-dependent_MTases_sf"/>
</dbReference>
<dbReference type="NCBIfam" id="TIGR00740">
    <property type="entry name" value="carboxy-S-adenosyl-L-methionine synthase CmoA"/>
    <property type="match status" value="1"/>
</dbReference>
<dbReference type="PANTHER" id="PTHR43861:SF2">
    <property type="entry name" value="CARBOXY-S-ADENOSYL-L-METHIONINE SYNTHASE"/>
    <property type="match status" value="1"/>
</dbReference>
<dbReference type="PANTHER" id="PTHR43861">
    <property type="entry name" value="TRANS-ACONITATE 2-METHYLTRANSFERASE-RELATED"/>
    <property type="match status" value="1"/>
</dbReference>
<dbReference type="Pfam" id="PF13649">
    <property type="entry name" value="Methyltransf_25"/>
    <property type="match status" value="1"/>
</dbReference>
<dbReference type="PIRSF" id="PIRSF006325">
    <property type="entry name" value="MeTrfase_bac"/>
    <property type="match status" value="1"/>
</dbReference>
<dbReference type="SUPFAM" id="SSF53335">
    <property type="entry name" value="S-adenosyl-L-methionine-dependent methyltransferases"/>
    <property type="match status" value="1"/>
</dbReference>
<name>CMOA_CAMJE</name>
<proteinExistence type="inferred from homology"/>
<protein>
    <recommendedName>
        <fullName evidence="1">Carboxy-S-adenosyl-L-methionine synthase</fullName>
        <shortName evidence="1">Cx-SAM synthase</shortName>
        <ecNumber evidence="1">2.1.3.-</ecNumber>
    </recommendedName>
</protein>
<evidence type="ECO:0000255" key="1">
    <source>
        <dbReference type="HAMAP-Rule" id="MF_01589"/>
    </source>
</evidence>
<evidence type="ECO:0000305" key="2"/>
<feature type="chain" id="PRO_0000314314" description="Carboxy-S-adenosyl-L-methionine synthase">
    <location>
        <begin position="1"/>
        <end position="235"/>
    </location>
</feature>
<feature type="binding site" evidence="1">
    <location>
        <position position="35"/>
    </location>
    <ligand>
        <name>S-adenosyl-L-methionine</name>
        <dbReference type="ChEBI" id="CHEBI:59789"/>
    </ligand>
</feature>
<feature type="binding site" evidence="1">
    <location>
        <begin position="60"/>
        <end position="62"/>
    </location>
    <ligand>
        <name>S-adenosyl-L-methionine</name>
        <dbReference type="ChEBI" id="CHEBI:59789"/>
    </ligand>
</feature>
<feature type="binding site" evidence="1">
    <location>
        <begin position="83"/>
        <end position="84"/>
    </location>
    <ligand>
        <name>S-adenosyl-L-methionine</name>
        <dbReference type="ChEBI" id="CHEBI:59789"/>
    </ligand>
</feature>
<feature type="binding site" evidence="1">
    <location>
        <position position="124"/>
    </location>
    <ligand>
        <name>S-adenosyl-L-methionine</name>
        <dbReference type="ChEBI" id="CHEBI:59789"/>
    </ligand>
</feature>
<feature type="binding site" evidence="1">
    <location>
        <position position="191"/>
    </location>
    <ligand>
        <name>S-adenosyl-L-methionine</name>
        <dbReference type="ChEBI" id="CHEBI:59789"/>
    </ligand>
</feature>